<reference key="1">
    <citation type="journal article" date="2005" name="J. Bacteriol.">
        <title>Insights on evolution of virulence and resistance from the complete genome analysis of an early methicillin-resistant Staphylococcus aureus strain and a biofilm-producing methicillin-resistant Staphylococcus epidermidis strain.</title>
        <authorList>
            <person name="Gill S.R."/>
            <person name="Fouts D.E."/>
            <person name="Archer G.L."/>
            <person name="Mongodin E.F."/>
            <person name="DeBoy R.T."/>
            <person name="Ravel J."/>
            <person name="Paulsen I.T."/>
            <person name="Kolonay J.F."/>
            <person name="Brinkac L.M."/>
            <person name="Beanan M.J."/>
            <person name="Dodson R.J."/>
            <person name="Daugherty S.C."/>
            <person name="Madupu R."/>
            <person name="Angiuoli S.V."/>
            <person name="Durkin A.S."/>
            <person name="Haft D.H."/>
            <person name="Vamathevan J.J."/>
            <person name="Khouri H."/>
            <person name="Utterback T.R."/>
            <person name="Lee C."/>
            <person name="Dimitrov G."/>
            <person name="Jiang L."/>
            <person name="Qin H."/>
            <person name="Weidman J."/>
            <person name="Tran K."/>
            <person name="Kang K.H."/>
            <person name="Hance I.R."/>
            <person name="Nelson K.E."/>
            <person name="Fraser C.M."/>
        </authorList>
    </citation>
    <scope>NUCLEOTIDE SEQUENCE [LARGE SCALE GENOMIC DNA]</scope>
    <source>
        <strain>COL</strain>
    </source>
</reference>
<gene>
    <name type="ordered locus">SACOL0596</name>
</gene>
<protein>
    <recommendedName>
        <fullName>Putative pyridoxal phosphate-dependent acyltransferase</fullName>
        <ecNumber>2.3.1.-</ecNumber>
    </recommendedName>
</protein>
<proteinExistence type="inferred from homology"/>
<accession>Q5HIC5</accession>
<comment type="cofactor">
    <cofactor evidence="1">
        <name>pyridoxal 5'-phosphate</name>
        <dbReference type="ChEBI" id="CHEBI:597326"/>
    </cofactor>
</comment>
<comment type="subunit">
    <text evidence="1">Homodimer.</text>
</comment>
<comment type="similarity">
    <text evidence="2">Belongs to the class-II pyridoxal-phosphate-dependent aminotransferase family.</text>
</comment>
<name>PPAT_STAAC</name>
<organism>
    <name type="scientific">Staphylococcus aureus (strain COL)</name>
    <dbReference type="NCBI Taxonomy" id="93062"/>
    <lineage>
        <taxon>Bacteria</taxon>
        <taxon>Bacillati</taxon>
        <taxon>Bacillota</taxon>
        <taxon>Bacilli</taxon>
        <taxon>Bacillales</taxon>
        <taxon>Staphylococcaceae</taxon>
        <taxon>Staphylococcus</taxon>
    </lineage>
</organism>
<dbReference type="EC" id="2.3.1.-"/>
<dbReference type="EMBL" id="CP000046">
    <property type="protein sequence ID" value="AAW37706.1"/>
    <property type="molecule type" value="Genomic_DNA"/>
</dbReference>
<dbReference type="RefSeq" id="WP_000250824.1">
    <property type="nucleotide sequence ID" value="NZ_JBGOFO010000009.1"/>
</dbReference>
<dbReference type="SMR" id="Q5HIC5"/>
<dbReference type="KEGG" id="sac:SACOL0596"/>
<dbReference type="HOGENOM" id="CLU_015846_11_0_9"/>
<dbReference type="Proteomes" id="UP000000530">
    <property type="component" value="Chromosome"/>
</dbReference>
<dbReference type="GO" id="GO:0030170">
    <property type="term" value="F:pyridoxal phosphate binding"/>
    <property type="evidence" value="ECO:0007669"/>
    <property type="project" value="InterPro"/>
</dbReference>
<dbReference type="GO" id="GO:0016740">
    <property type="term" value="F:transferase activity"/>
    <property type="evidence" value="ECO:0007669"/>
    <property type="project" value="UniProtKB-KW"/>
</dbReference>
<dbReference type="GO" id="GO:0009058">
    <property type="term" value="P:biosynthetic process"/>
    <property type="evidence" value="ECO:0007669"/>
    <property type="project" value="InterPro"/>
</dbReference>
<dbReference type="CDD" id="cd06454">
    <property type="entry name" value="KBL_like"/>
    <property type="match status" value="1"/>
</dbReference>
<dbReference type="FunFam" id="3.40.640.10:FF:000006">
    <property type="entry name" value="5-aminolevulinate synthase, mitochondrial"/>
    <property type="match status" value="1"/>
</dbReference>
<dbReference type="Gene3D" id="3.90.1150.10">
    <property type="entry name" value="Aspartate Aminotransferase, domain 1"/>
    <property type="match status" value="1"/>
</dbReference>
<dbReference type="Gene3D" id="3.40.640.10">
    <property type="entry name" value="Type I PLP-dependent aspartate aminotransferase-like (Major domain)"/>
    <property type="match status" value="1"/>
</dbReference>
<dbReference type="InterPro" id="IPR001917">
    <property type="entry name" value="Aminotrans_II_pyridoxalP_BS"/>
</dbReference>
<dbReference type="InterPro" id="IPR004839">
    <property type="entry name" value="Aminotransferase_I/II_large"/>
</dbReference>
<dbReference type="InterPro" id="IPR050087">
    <property type="entry name" value="AON_synthase_class-II"/>
</dbReference>
<dbReference type="InterPro" id="IPR010962">
    <property type="entry name" value="AONS_Archaea/Firmicutes"/>
</dbReference>
<dbReference type="InterPro" id="IPR015424">
    <property type="entry name" value="PyrdxlP-dep_Trfase"/>
</dbReference>
<dbReference type="InterPro" id="IPR015421">
    <property type="entry name" value="PyrdxlP-dep_Trfase_major"/>
</dbReference>
<dbReference type="InterPro" id="IPR015422">
    <property type="entry name" value="PyrdxlP-dep_Trfase_small"/>
</dbReference>
<dbReference type="NCBIfam" id="TIGR01825">
    <property type="entry name" value="gly_Cac_T_rel"/>
    <property type="match status" value="1"/>
</dbReference>
<dbReference type="NCBIfam" id="NF005394">
    <property type="entry name" value="PRK06939.1"/>
    <property type="match status" value="1"/>
</dbReference>
<dbReference type="PANTHER" id="PTHR13693">
    <property type="entry name" value="CLASS II AMINOTRANSFERASE/8-AMINO-7-OXONONANOATE SYNTHASE"/>
    <property type="match status" value="1"/>
</dbReference>
<dbReference type="PANTHER" id="PTHR13693:SF3">
    <property type="entry name" value="LD36009P"/>
    <property type="match status" value="1"/>
</dbReference>
<dbReference type="Pfam" id="PF00155">
    <property type="entry name" value="Aminotran_1_2"/>
    <property type="match status" value="1"/>
</dbReference>
<dbReference type="SUPFAM" id="SSF53383">
    <property type="entry name" value="PLP-dependent transferases"/>
    <property type="match status" value="1"/>
</dbReference>
<dbReference type="PROSITE" id="PS00599">
    <property type="entry name" value="AA_TRANSFER_CLASS_2"/>
    <property type="match status" value="1"/>
</dbReference>
<sequence length="395" mass="42891">MVQSLHEFLEENINYLKENGLYNEIDTIEGANGPEIKINGKSYINLSSNNYLGLATNEDLKSAAKAAIDTHGVGAGAVRTINGTLDLHDELEETLAKFKGTEAAIAYQSGFNCNMAAISAVMNKNDAILSDELNHASIIDGCRLSKAKIIRVNHSDMDDLRAKAKEAVESGQYNKVMYITDGVFSMDGDVAKLPEIVEIAEEFGLLTYVDDAHGSGVMGKGAGTVKHFGLQDKIDFQIGTLSKAIGVVGGYVAGTKELIDWLKAQSRPFLFSTSLAPGDTKAITEAVKKLMDSTELHDKLWNNAQYLKNGLSKLGYDTGESETPITPVIIGDEKTTQEFSKRLKDEGVYVKSIVFPTVPRGTGRVRNMPTAAHTKDMLDEAIAAYEKVGKEMKLI</sequence>
<keyword id="KW-0663">Pyridoxal phosphate</keyword>
<keyword id="KW-0808">Transferase</keyword>
<evidence type="ECO:0000250" key="1"/>
<evidence type="ECO:0000305" key="2"/>
<feature type="chain" id="PRO_0000163837" description="Putative pyridoxal phosphate-dependent acyltransferase">
    <location>
        <begin position="1"/>
        <end position="395"/>
    </location>
</feature>
<feature type="binding site" evidence="1">
    <location>
        <begin position="110"/>
        <end position="111"/>
    </location>
    <ligand>
        <name>pyridoxal 5'-phosphate</name>
        <dbReference type="ChEBI" id="CHEBI:597326"/>
    </ligand>
</feature>
<feature type="binding site" evidence="1">
    <location>
        <position position="135"/>
    </location>
    <ligand>
        <name>substrate</name>
    </ligand>
</feature>
<feature type="binding site" evidence="1">
    <location>
        <position position="185"/>
    </location>
    <ligand>
        <name>pyridoxal 5'-phosphate</name>
        <dbReference type="ChEBI" id="CHEBI:597326"/>
    </ligand>
</feature>
<feature type="binding site" evidence="1">
    <location>
        <begin position="210"/>
        <end position="213"/>
    </location>
    <ligand>
        <name>pyridoxal 5'-phosphate</name>
        <dbReference type="ChEBI" id="CHEBI:597326"/>
    </ligand>
</feature>
<feature type="binding site" evidence="1">
    <location>
        <begin position="240"/>
        <end position="243"/>
    </location>
    <ligand>
        <name>pyridoxal 5'-phosphate</name>
        <dbReference type="ChEBI" id="CHEBI:597326"/>
    </ligand>
</feature>
<feature type="binding site" evidence="1">
    <location>
        <position position="357"/>
    </location>
    <ligand>
        <name>substrate</name>
    </ligand>
</feature>
<feature type="modified residue" description="N6-(pyridoxal phosphate)lysine" evidence="2">
    <location>
        <position position="243"/>
    </location>
</feature>